<gene>
    <name type="primary">sbcC</name>
    <name type="ordered locus">VC_A0521</name>
</gene>
<keyword id="KW-0067">ATP-binding</keyword>
<keyword id="KW-0175">Coiled coil</keyword>
<keyword id="KW-0233">DNA recombination</keyword>
<keyword id="KW-0235">DNA replication</keyword>
<keyword id="KW-0255">Endonuclease</keyword>
<keyword id="KW-0269">Exonuclease</keyword>
<keyword id="KW-0378">Hydrolase</keyword>
<keyword id="KW-0540">Nuclease</keyword>
<keyword id="KW-0547">Nucleotide-binding</keyword>
<keyword id="KW-1185">Reference proteome</keyword>
<sequence>MRPLKLILQAFGPFAGREEIDFTKLGDAPLFLINGATGAGKSSILDAICYALYGETTGSERTGDQMRCDYAAPESLTEVIFEFELAGARYQITRQPDQEIPKKRGEGMTKKSHSATLVALKSDGNELIANKPNPVAKAVVELMGLDVKQFRQVMVLPQGKFRELLTANSKEREQIFGQLFQTQLYSQIERALFERAAGIRKEKEEFDQQIKGTLSVVGLESEEQLQTELTELAPVLTHAQSQLKAEQQQWDETKAHYQAALELEQQFIRKQQLVVEIATHQEQATHIEMLRQQRQQAQKAARLTAVHQQWHQAQKNLQQAKLKVEQQQTLLQQAKAQQQQAQQASQQASLACEEVPKLNEQRITWQRAEQKLLAQENVQQAVAKAERELQLATQNALNLQQASEKLEQELQNQRLEWEQQQRQLTRLEVQKARMNQLVQQVQAREREQSLLNELQTAQQALLRFEQQHHHIQTQAEQAKLTADKLEFAWHTQRAAELALALTQNEPCPVCGSLEHPNKAQYSGDVVTKVQVEQARQQQQDWVQRQQEAFHAWQQQGFKTEQIAQNLTTLSSELTLQQVALLNELIEQQQILHSDIAALQQLNPDLLKRQIEEGEQRLAHTKMTLEKQNQNQQQAWQTLAQLQAELASLRQEIPPELSDLDTLRSAIGRVQNQIEILQKAEHTAREQWVQAQKQFASVQAAYQAAIEAHRESQRQQEETTSAWQQGLLHSGFSDESAYLAARLTDEAIVNIERQIAQYEERSAMLSGEQQALSRKLAEKNRPELEPLLVKVTQAEEKMALALQAFTQHQSRMDGLQRVAKQLADLYQKNRALEAEYQVVGTLSDIANGKTGAKVSLHRFVLGVLLDDVLLQASQRLMKMSRGRYLLKRKEERAKGNVGSGLDLMVEDSYSGKWRDVATLSGGESFMAALSLALGLSDVVQAYSGGIRLDTLFIDEGFGSLDPESLDLAIQTLIDLQQGGRTIGIISHVTELKEQIGLRLDVLATRMGSTLRLIT</sequence>
<feature type="chain" id="PRO_0000105869" description="Nuclease SbcCD subunit C">
    <location>
        <begin position="1"/>
        <end position="1013"/>
    </location>
</feature>
<feature type="coiled-coil region" evidence="2">
    <location>
        <begin position="242"/>
        <end position="262"/>
    </location>
</feature>
<feature type="coiled-coil region" evidence="2">
    <location>
        <begin position="281"/>
        <end position="486"/>
    </location>
</feature>
<feature type="coiled-coil region" evidence="2">
    <location>
        <begin position="604"/>
        <end position="717"/>
    </location>
</feature>
<feature type="coiled-coil region" evidence="2">
    <location>
        <begin position="739"/>
        <end position="838"/>
    </location>
</feature>
<feature type="binding site" evidence="2">
    <location>
        <begin position="35"/>
        <end position="42"/>
    </location>
    <ligand>
        <name>ATP</name>
        <dbReference type="ChEBI" id="CHEBI:30616"/>
    </ligand>
</feature>
<dbReference type="EMBL" id="AE003853">
    <property type="protein sequence ID" value="AAF96424.1"/>
    <property type="molecule type" value="Genomic_DNA"/>
</dbReference>
<dbReference type="PIR" id="G82450">
    <property type="entry name" value="G82450"/>
</dbReference>
<dbReference type="RefSeq" id="NP_232912.1">
    <property type="nucleotide sequence ID" value="NC_002506.1"/>
</dbReference>
<dbReference type="RefSeq" id="WP_001247622.1">
    <property type="nucleotide sequence ID" value="NZ_LT906615.1"/>
</dbReference>
<dbReference type="SMR" id="Q9KM67"/>
<dbReference type="STRING" id="243277.VC_A0521"/>
<dbReference type="DNASU" id="2612669"/>
<dbReference type="EnsemblBacteria" id="AAF96424">
    <property type="protein sequence ID" value="AAF96424"/>
    <property type="gene ID" value="VC_A0521"/>
</dbReference>
<dbReference type="KEGG" id="vch:VC_A0521"/>
<dbReference type="PATRIC" id="fig|243277.26.peg.3147"/>
<dbReference type="eggNOG" id="COG0419">
    <property type="taxonomic scope" value="Bacteria"/>
</dbReference>
<dbReference type="HOGENOM" id="CLU_004785_2_1_6"/>
<dbReference type="Proteomes" id="UP000000584">
    <property type="component" value="Chromosome 2"/>
</dbReference>
<dbReference type="GO" id="GO:1990391">
    <property type="term" value="C:DNA repair complex"/>
    <property type="evidence" value="ECO:0000318"/>
    <property type="project" value="GO_Central"/>
</dbReference>
<dbReference type="GO" id="GO:0005524">
    <property type="term" value="F:ATP binding"/>
    <property type="evidence" value="ECO:0007669"/>
    <property type="project" value="UniProtKB-KW"/>
</dbReference>
<dbReference type="GO" id="GO:0016887">
    <property type="term" value="F:ATP hydrolysis activity"/>
    <property type="evidence" value="ECO:0007669"/>
    <property type="project" value="InterPro"/>
</dbReference>
<dbReference type="GO" id="GO:0004529">
    <property type="term" value="F:DNA exonuclease activity"/>
    <property type="evidence" value="ECO:0000318"/>
    <property type="project" value="GO_Central"/>
</dbReference>
<dbReference type="GO" id="GO:0004519">
    <property type="term" value="F:endonuclease activity"/>
    <property type="evidence" value="ECO:0007669"/>
    <property type="project" value="UniProtKB-KW"/>
</dbReference>
<dbReference type="GO" id="GO:0006310">
    <property type="term" value="P:DNA recombination"/>
    <property type="evidence" value="ECO:0007669"/>
    <property type="project" value="UniProtKB-KW"/>
</dbReference>
<dbReference type="GO" id="GO:0006281">
    <property type="term" value="P:DNA repair"/>
    <property type="evidence" value="ECO:0000318"/>
    <property type="project" value="GO_Central"/>
</dbReference>
<dbReference type="GO" id="GO:0006260">
    <property type="term" value="P:DNA replication"/>
    <property type="evidence" value="ECO:0007669"/>
    <property type="project" value="UniProtKB-KW"/>
</dbReference>
<dbReference type="GO" id="GO:0006302">
    <property type="term" value="P:double-strand break repair"/>
    <property type="evidence" value="ECO:0007669"/>
    <property type="project" value="InterPro"/>
</dbReference>
<dbReference type="FunFam" id="3.40.50.300:FF:001446">
    <property type="entry name" value="DsDNA exonuclease SbcC"/>
    <property type="match status" value="1"/>
</dbReference>
<dbReference type="FunFam" id="3.40.50.300:FF:002866">
    <property type="entry name" value="DsDNA exonuclease SbcC"/>
    <property type="match status" value="1"/>
</dbReference>
<dbReference type="Gene3D" id="3.40.50.300">
    <property type="entry name" value="P-loop containing nucleotide triphosphate hydrolases"/>
    <property type="match status" value="2"/>
</dbReference>
<dbReference type="InterPro" id="IPR027417">
    <property type="entry name" value="P-loop_NTPase"/>
</dbReference>
<dbReference type="InterPro" id="IPR038729">
    <property type="entry name" value="Rad50/SbcC_AAA"/>
</dbReference>
<dbReference type="PANTHER" id="PTHR32114">
    <property type="entry name" value="ABC TRANSPORTER ABCH.3"/>
    <property type="match status" value="1"/>
</dbReference>
<dbReference type="PANTHER" id="PTHR32114:SF2">
    <property type="entry name" value="ABC TRANSPORTER ABCH.3"/>
    <property type="match status" value="1"/>
</dbReference>
<dbReference type="Pfam" id="PF13476">
    <property type="entry name" value="AAA_23"/>
    <property type="match status" value="1"/>
</dbReference>
<dbReference type="Pfam" id="PF13558">
    <property type="entry name" value="SbcC_Walker_B"/>
    <property type="match status" value="1"/>
</dbReference>
<dbReference type="SUPFAM" id="SSF52540">
    <property type="entry name" value="P-loop containing nucleoside triphosphate hydrolases"/>
    <property type="match status" value="1"/>
</dbReference>
<comment type="function">
    <text evidence="1">SbcCD cleaves DNA hairpin structures. These structures can inhibit DNA replication and are intermediates in certain DNA recombination reactions. The complex acts as a 3'-&gt;5' double strand exonuclease that can open hairpins. It also has a 5' single-strand endonuclease activity (By similarity).</text>
</comment>
<comment type="subunit">
    <text evidence="1">Heterodimer of SbcC and SbcD.</text>
</comment>
<comment type="similarity">
    <text evidence="3">Belongs to the SMC family. SbcC subfamily.</text>
</comment>
<protein>
    <recommendedName>
        <fullName>Nuclease SbcCD subunit C</fullName>
    </recommendedName>
</protein>
<reference key="1">
    <citation type="journal article" date="2000" name="Nature">
        <title>DNA sequence of both chromosomes of the cholera pathogen Vibrio cholerae.</title>
        <authorList>
            <person name="Heidelberg J.F."/>
            <person name="Eisen J.A."/>
            <person name="Nelson W.C."/>
            <person name="Clayton R.A."/>
            <person name="Gwinn M.L."/>
            <person name="Dodson R.J."/>
            <person name="Haft D.H."/>
            <person name="Hickey E.K."/>
            <person name="Peterson J.D."/>
            <person name="Umayam L.A."/>
            <person name="Gill S.R."/>
            <person name="Nelson K.E."/>
            <person name="Read T.D."/>
            <person name="Tettelin H."/>
            <person name="Richardson D.L."/>
            <person name="Ermolaeva M.D."/>
            <person name="Vamathevan J.J."/>
            <person name="Bass S."/>
            <person name="Qin H."/>
            <person name="Dragoi I."/>
            <person name="Sellers P."/>
            <person name="McDonald L.A."/>
            <person name="Utterback T.R."/>
            <person name="Fleischmann R.D."/>
            <person name="Nierman W.C."/>
            <person name="White O."/>
            <person name="Salzberg S.L."/>
            <person name="Smith H.O."/>
            <person name="Colwell R.R."/>
            <person name="Mekalanos J.J."/>
            <person name="Venter J.C."/>
            <person name="Fraser C.M."/>
        </authorList>
    </citation>
    <scope>NUCLEOTIDE SEQUENCE [LARGE SCALE GENOMIC DNA]</scope>
    <source>
        <strain>ATCC 39315 / El Tor Inaba N16961</strain>
    </source>
</reference>
<organism>
    <name type="scientific">Vibrio cholerae serotype O1 (strain ATCC 39315 / El Tor Inaba N16961)</name>
    <dbReference type="NCBI Taxonomy" id="243277"/>
    <lineage>
        <taxon>Bacteria</taxon>
        <taxon>Pseudomonadati</taxon>
        <taxon>Pseudomonadota</taxon>
        <taxon>Gammaproteobacteria</taxon>
        <taxon>Vibrionales</taxon>
        <taxon>Vibrionaceae</taxon>
        <taxon>Vibrio</taxon>
    </lineage>
</organism>
<name>SBCC_VIBCH</name>
<proteinExistence type="inferred from homology"/>
<evidence type="ECO:0000250" key="1"/>
<evidence type="ECO:0000255" key="2"/>
<evidence type="ECO:0000305" key="3"/>
<accession>Q9KM67</accession>